<dbReference type="EMBL" id="AK024972">
    <property type="protein sequence ID" value="BAB15047.1"/>
    <property type="molecule type" value="mRNA"/>
</dbReference>
<dbReference type="EMBL" id="AF177334">
    <property type="protein sequence ID" value="AAG17978.1"/>
    <property type="molecule type" value="mRNA"/>
</dbReference>
<dbReference type="EMBL" id="AL834194">
    <property type="protein sequence ID" value="CAD38884.1"/>
    <property type="molecule type" value="mRNA"/>
</dbReference>
<dbReference type="EMBL" id="AL604028">
    <property type="status" value="NOT_ANNOTATED_CDS"/>
    <property type="molecule type" value="Genomic_DNA"/>
</dbReference>
<dbReference type="EMBL" id="CH471059">
    <property type="protein sequence ID" value="EAX06959.1"/>
    <property type="molecule type" value="Genomic_DNA"/>
</dbReference>
<dbReference type="EMBL" id="CH471059">
    <property type="protein sequence ID" value="EAX06960.1"/>
    <property type="molecule type" value="Genomic_DNA"/>
</dbReference>
<dbReference type="EMBL" id="BC015713">
    <property type="protein sequence ID" value="AAH15713.1"/>
    <property type="molecule type" value="mRNA"/>
</dbReference>
<dbReference type="EMBL" id="BC022218">
    <property type="protein sequence ID" value="AAH22218.1"/>
    <property type="molecule type" value="mRNA"/>
</dbReference>
<dbReference type="EMBL" id="BC052257">
    <property type="protein sequence ID" value="AAH52257.1"/>
    <property type="molecule type" value="mRNA"/>
</dbReference>
<dbReference type="CCDS" id="CCDS528.1"/>
<dbReference type="RefSeq" id="NP_067652.1">
    <property type="nucleotide sequence ID" value="NM_021639.5"/>
</dbReference>
<dbReference type="RefSeq" id="XP_024304574.1">
    <property type="nucleotide sequence ID" value="XM_024448806.2"/>
</dbReference>
<dbReference type="RefSeq" id="XP_024304576.1">
    <property type="nucleotide sequence ID" value="XM_024448808.2"/>
</dbReference>
<dbReference type="RefSeq" id="XP_024304577.1">
    <property type="nucleotide sequence ID" value="XM_024448809.2"/>
</dbReference>
<dbReference type="RefSeq" id="XP_024304578.1">
    <property type="nucleotide sequence ID" value="XM_024448810.2"/>
</dbReference>
<dbReference type="RefSeq" id="XP_047283015.1">
    <property type="nucleotide sequence ID" value="XM_047427059.1"/>
</dbReference>
<dbReference type="RefSeq" id="XP_047283022.1">
    <property type="nucleotide sequence ID" value="XM_047427066.1"/>
</dbReference>
<dbReference type="RefSeq" id="XP_047283023.1">
    <property type="nucleotide sequence ID" value="XM_047427067.1"/>
</dbReference>
<dbReference type="RefSeq" id="XP_047283025.1">
    <property type="nucleotide sequence ID" value="XM_047427069.1"/>
</dbReference>
<dbReference type="RefSeq" id="XP_047283026.1">
    <property type="nucleotide sequence ID" value="XM_047427070.1"/>
</dbReference>
<dbReference type="RefSeq" id="XP_054194029.1">
    <property type="nucleotide sequence ID" value="XM_054338054.1"/>
</dbReference>
<dbReference type="RefSeq" id="XP_054194030.1">
    <property type="nucleotide sequence ID" value="XM_054338055.1"/>
</dbReference>
<dbReference type="RefSeq" id="XP_054194031.1">
    <property type="nucleotide sequence ID" value="XM_054338056.1"/>
</dbReference>
<dbReference type="RefSeq" id="XP_054194032.1">
    <property type="nucleotide sequence ID" value="XM_054338057.1"/>
</dbReference>
<dbReference type="RefSeq" id="XP_054194033.1">
    <property type="nucleotide sequence ID" value="XM_054338058.1"/>
</dbReference>
<dbReference type="RefSeq" id="XP_054194034.1">
    <property type="nucleotide sequence ID" value="XM_054338059.1"/>
</dbReference>
<dbReference type="RefSeq" id="XP_054194035.1">
    <property type="nucleotide sequence ID" value="XM_054338060.1"/>
</dbReference>
<dbReference type="RefSeq" id="XP_054194036.1">
    <property type="nucleotide sequence ID" value="XM_054338061.1"/>
</dbReference>
<dbReference type="RefSeq" id="XP_054194037.1">
    <property type="nucleotide sequence ID" value="XM_054338062.1"/>
</dbReference>
<dbReference type="BioGRID" id="121896">
    <property type="interactions" value="95"/>
</dbReference>
<dbReference type="FunCoup" id="Q9HC44">
    <property type="interactions" value="2393"/>
</dbReference>
<dbReference type="IntAct" id="Q9HC44">
    <property type="interactions" value="73"/>
</dbReference>
<dbReference type="STRING" id="9606.ENSP00000347224"/>
<dbReference type="GlyGen" id="Q9HC44">
    <property type="glycosylation" value="1 site, 1 O-linked glycan (1 site)"/>
</dbReference>
<dbReference type="iPTMnet" id="Q9HC44"/>
<dbReference type="PhosphoSitePlus" id="Q9HC44"/>
<dbReference type="BioMuta" id="GPBP1L1"/>
<dbReference type="DMDM" id="74752789"/>
<dbReference type="jPOST" id="Q9HC44"/>
<dbReference type="MassIVE" id="Q9HC44"/>
<dbReference type="PaxDb" id="9606-ENSP00000347224"/>
<dbReference type="PeptideAtlas" id="Q9HC44"/>
<dbReference type="ProteomicsDB" id="81636"/>
<dbReference type="Pumba" id="Q9HC44"/>
<dbReference type="Antibodypedia" id="32691">
    <property type="antibodies" value="59 antibodies from 18 providers"/>
</dbReference>
<dbReference type="DNASU" id="60313"/>
<dbReference type="Ensembl" id="ENST00000290795.7">
    <property type="protein sequence ID" value="ENSP00000290795.3"/>
    <property type="gene ID" value="ENSG00000159592.11"/>
</dbReference>
<dbReference type="Ensembl" id="ENST00000355105.8">
    <property type="protein sequence ID" value="ENSP00000347224.3"/>
    <property type="gene ID" value="ENSG00000159592.11"/>
</dbReference>
<dbReference type="GeneID" id="60313"/>
<dbReference type="KEGG" id="hsa:60313"/>
<dbReference type="MANE-Select" id="ENST00000355105.8">
    <property type="protein sequence ID" value="ENSP00000347224.3"/>
    <property type="RefSeq nucleotide sequence ID" value="NM_021639.5"/>
    <property type="RefSeq protein sequence ID" value="NP_067652.1"/>
</dbReference>
<dbReference type="UCSC" id="uc001coq.4">
    <property type="organism name" value="human"/>
</dbReference>
<dbReference type="AGR" id="HGNC:28843"/>
<dbReference type="CTD" id="60313"/>
<dbReference type="DisGeNET" id="60313"/>
<dbReference type="GeneCards" id="GPBP1L1"/>
<dbReference type="HGNC" id="HGNC:28843">
    <property type="gene designation" value="GPBP1L1"/>
</dbReference>
<dbReference type="HPA" id="ENSG00000159592">
    <property type="expression patterns" value="Low tissue specificity"/>
</dbReference>
<dbReference type="neXtProt" id="NX_Q9HC44"/>
<dbReference type="OpenTargets" id="ENSG00000159592"/>
<dbReference type="PharmGKB" id="PA142671715"/>
<dbReference type="VEuPathDB" id="HostDB:ENSG00000159592"/>
<dbReference type="eggNOG" id="ENOG502QPN2">
    <property type="taxonomic scope" value="Eukaryota"/>
</dbReference>
<dbReference type="GeneTree" id="ENSGT00420000029753"/>
<dbReference type="HOGENOM" id="CLU_045487_0_0_1"/>
<dbReference type="InParanoid" id="Q9HC44"/>
<dbReference type="OMA" id="AGRQNNQ"/>
<dbReference type="OrthoDB" id="8741226at2759"/>
<dbReference type="PAN-GO" id="Q9HC44">
    <property type="GO annotations" value="2 GO annotations based on evolutionary models"/>
</dbReference>
<dbReference type="PhylomeDB" id="Q9HC44"/>
<dbReference type="TreeFam" id="TF332220"/>
<dbReference type="PathwayCommons" id="Q9HC44"/>
<dbReference type="SignaLink" id="Q9HC44"/>
<dbReference type="BioGRID-ORCS" id="60313">
    <property type="hits" value="18 hits in 1167 CRISPR screens"/>
</dbReference>
<dbReference type="ChiTaRS" id="GPBP1L1">
    <property type="organism name" value="human"/>
</dbReference>
<dbReference type="GenomeRNAi" id="60313"/>
<dbReference type="Pharos" id="Q9HC44">
    <property type="development level" value="Tdark"/>
</dbReference>
<dbReference type="PRO" id="PR:Q9HC44"/>
<dbReference type="Proteomes" id="UP000005640">
    <property type="component" value="Chromosome 1"/>
</dbReference>
<dbReference type="RNAct" id="Q9HC44">
    <property type="molecule type" value="protein"/>
</dbReference>
<dbReference type="Bgee" id="ENSG00000159592">
    <property type="expression patterns" value="Expressed in colonic epithelium and 206 other cell types or tissues"/>
</dbReference>
<dbReference type="GO" id="GO:0005634">
    <property type="term" value="C:nucleus"/>
    <property type="evidence" value="ECO:0000318"/>
    <property type="project" value="GO_Central"/>
</dbReference>
<dbReference type="GO" id="GO:0003677">
    <property type="term" value="F:DNA binding"/>
    <property type="evidence" value="ECO:0007669"/>
    <property type="project" value="UniProtKB-KW"/>
</dbReference>
<dbReference type="GO" id="GO:0003723">
    <property type="term" value="F:RNA binding"/>
    <property type="evidence" value="ECO:0007669"/>
    <property type="project" value="InterPro"/>
</dbReference>
<dbReference type="GO" id="GO:0006351">
    <property type="term" value="P:DNA-templated transcription"/>
    <property type="evidence" value="ECO:0007669"/>
    <property type="project" value="InterPro"/>
</dbReference>
<dbReference type="GO" id="GO:0045893">
    <property type="term" value="P:positive regulation of DNA-templated transcription"/>
    <property type="evidence" value="ECO:0007669"/>
    <property type="project" value="InterPro"/>
</dbReference>
<dbReference type="GO" id="GO:0006355">
    <property type="term" value="P:regulation of DNA-templated transcription"/>
    <property type="evidence" value="ECO:0000318"/>
    <property type="project" value="GO_Central"/>
</dbReference>
<dbReference type="InterPro" id="IPR028128">
    <property type="entry name" value="Vasculin_fam"/>
</dbReference>
<dbReference type="PANTHER" id="PTHR14339">
    <property type="entry name" value="VASCULIN"/>
    <property type="match status" value="1"/>
</dbReference>
<dbReference type="PANTHER" id="PTHR14339:SF10">
    <property type="entry name" value="VASCULIN-LIKE PROTEIN 1"/>
    <property type="match status" value="1"/>
</dbReference>
<dbReference type="Pfam" id="PF15337">
    <property type="entry name" value="Vasculin"/>
    <property type="match status" value="1"/>
</dbReference>
<feature type="chain" id="PRO_0000324115" description="Vasculin-like protein 1">
    <location>
        <begin position="1"/>
        <end position="474"/>
    </location>
</feature>
<feature type="region of interest" description="Disordered" evidence="2">
    <location>
        <begin position="17"/>
        <end position="42"/>
    </location>
</feature>
<feature type="region of interest" description="Disordered" evidence="2">
    <location>
        <begin position="91"/>
        <end position="191"/>
    </location>
</feature>
<feature type="region of interest" description="Disordered" evidence="2">
    <location>
        <begin position="238"/>
        <end position="371"/>
    </location>
</feature>
<feature type="region of interest" description="Disordered" evidence="2">
    <location>
        <begin position="453"/>
        <end position="474"/>
    </location>
</feature>
<feature type="compositionally biased region" description="Basic and acidic residues" evidence="2">
    <location>
        <begin position="26"/>
        <end position="38"/>
    </location>
</feature>
<feature type="compositionally biased region" description="Basic residues" evidence="2">
    <location>
        <begin position="116"/>
        <end position="128"/>
    </location>
</feature>
<feature type="compositionally biased region" description="Basic and acidic residues" evidence="2">
    <location>
        <begin position="136"/>
        <end position="154"/>
    </location>
</feature>
<feature type="compositionally biased region" description="Polar residues" evidence="2">
    <location>
        <begin position="262"/>
        <end position="277"/>
    </location>
</feature>
<feature type="compositionally biased region" description="Low complexity" evidence="2">
    <location>
        <begin position="291"/>
        <end position="312"/>
    </location>
</feature>
<feature type="compositionally biased region" description="Basic and acidic residues" evidence="2">
    <location>
        <begin position="317"/>
        <end position="346"/>
    </location>
</feature>
<feature type="compositionally biased region" description="Basic and acidic residues" evidence="2">
    <location>
        <begin position="356"/>
        <end position="365"/>
    </location>
</feature>
<feature type="modified residue" description="Phosphoserine" evidence="4 5 6">
    <location>
        <position position="49"/>
    </location>
</feature>
<feature type="modified residue" description="Phosphoserine" evidence="6">
    <location>
        <position position="76"/>
    </location>
</feature>
<feature type="modified residue" description="Phosphoserine" evidence="5">
    <location>
        <position position="202"/>
    </location>
</feature>
<feature type="modified residue" description="Phosphoserine" evidence="1">
    <location>
        <position position="292"/>
    </location>
</feature>
<feature type="modified residue" description="Phosphothreonine" evidence="6">
    <location>
        <position position="301"/>
    </location>
</feature>
<feature type="modified residue" description="Phosphoserine" evidence="6">
    <location>
        <position position="382"/>
    </location>
</feature>
<feature type="sequence variant" id="VAR_039655" description="In dbSNP:rs36067922.">
    <original>P</original>
    <variation>S</variation>
    <location>
        <position position="192"/>
    </location>
</feature>
<feature type="sequence variant" id="VAR_039656" description="In dbSNP:rs12093126.">
    <original>R</original>
    <variation>H</variation>
    <location>
        <position position="439"/>
    </location>
</feature>
<feature type="sequence conflict" description="In Ref. 1; BAB15047." evidence="3" ref="1">
    <original>K</original>
    <variation>R</variation>
    <location>
        <position position="148"/>
    </location>
</feature>
<feature type="sequence conflict" description="In Ref. 1; BAB15047." evidence="3" ref="1">
    <original>I</original>
    <variation>V</variation>
    <location>
        <position position="306"/>
    </location>
</feature>
<proteinExistence type="evidence at protein level"/>
<evidence type="ECO:0000250" key="1">
    <source>
        <dbReference type="UniProtKB" id="Q6NZP2"/>
    </source>
</evidence>
<evidence type="ECO:0000256" key="2">
    <source>
        <dbReference type="SAM" id="MobiDB-lite"/>
    </source>
</evidence>
<evidence type="ECO:0000305" key="3"/>
<evidence type="ECO:0007744" key="4">
    <source>
    </source>
</evidence>
<evidence type="ECO:0007744" key="5">
    <source>
    </source>
</evidence>
<evidence type="ECO:0007744" key="6">
    <source>
    </source>
</evidence>
<gene>
    <name type="primary">GPBP1L1</name>
    <name type="ORF">SP192</name>
</gene>
<accession>Q9HC44</accession>
<accession>D3DQ10</accession>
<accession>Q9H751</accession>
<comment type="function">
    <text evidence="3">Possible transcription factor.</text>
</comment>
<comment type="interaction">
    <interactant intactId="EBI-746674">
        <id>Q9HC44</id>
    </interactant>
    <interactant intactId="EBI-2562014">
        <id>Q9UKZ1</id>
        <label>CNOT11</label>
    </interactant>
    <organismsDiffer>false</organismsDiffer>
    <experiments>7</experiments>
</comment>
<comment type="interaction">
    <interactant intactId="EBI-746674">
        <id>Q9HC44</id>
    </interactant>
    <interactant intactId="EBI-347740">
        <id>P60228</id>
        <label>EIF3E</label>
    </interactant>
    <organismsDiffer>false</organismsDiffer>
    <experiments>4</experiments>
</comment>
<comment type="interaction">
    <interactant intactId="EBI-746674">
        <id>Q9HC44</id>
    </interactant>
    <interactant intactId="EBI-852851">
        <id>P01100</id>
        <label>FOS</label>
    </interactant>
    <organismsDiffer>false</organismsDiffer>
    <experiments>3</experiments>
</comment>
<comment type="interaction">
    <interactant intactId="EBI-746674">
        <id>Q9HC44</id>
    </interactant>
    <interactant intactId="EBI-1052596">
        <id>P31930</id>
        <label>UQCRC1</label>
    </interactant>
    <organismsDiffer>false</organismsDiffer>
    <experiments>3</experiments>
</comment>
<comment type="subcellular location">
    <subcellularLocation>
        <location evidence="3">Nucleus</location>
    </subcellularLocation>
</comment>
<comment type="similarity">
    <text evidence="3">Belongs to the vasculin family.</text>
</comment>
<organism>
    <name type="scientific">Homo sapiens</name>
    <name type="common">Human</name>
    <dbReference type="NCBI Taxonomy" id="9606"/>
    <lineage>
        <taxon>Eukaryota</taxon>
        <taxon>Metazoa</taxon>
        <taxon>Chordata</taxon>
        <taxon>Craniata</taxon>
        <taxon>Vertebrata</taxon>
        <taxon>Euteleostomi</taxon>
        <taxon>Mammalia</taxon>
        <taxon>Eutheria</taxon>
        <taxon>Euarchontoglires</taxon>
        <taxon>Primates</taxon>
        <taxon>Haplorrhini</taxon>
        <taxon>Catarrhini</taxon>
        <taxon>Hominidae</taxon>
        <taxon>Homo</taxon>
    </lineage>
</organism>
<name>GPBL1_HUMAN</name>
<protein>
    <recommendedName>
        <fullName>Vasculin-like protein 1</fullName>
    </recommendedName>
    <alternativeName>
        <fullName>GC-rich promoter-binding protein 1-like 1</fullName>
    </alternativeName>
</protein>
<keyword id="KW-0238">DNA-binding</keyword>
<keyword id="KW-0539">Nucleus</keyword>
<keyword id="KW-0597">Phosphoprotein</keyword>
<keyword id="KW-1267">Proteomics identification</keyword>
<keyword id="KW-1185">Reference proteome</keyword>
<keyword id="KW-0804">Transcription</keyword>
<keyword id="KW-0805">Transcription regulation</keyword>
<reference key="1">
    <citation type="journal article" date="2004" name="Nat. Genet.">
        <title>Complete sequencing and characterization of 21,243 full-length human cDNAs.</title>
        <authorList>
            <person name="Ota T."/>
            <person name="Suzuki Y."/>
            <person name="Nishikawa T."/>
            <person name="Otsuki T."/>
            <person name="Sugiyama T."/>
            <person name="Irie R."/>
            <person name="Wakamatsu A."/>
            <person name="Hayashi K."/>
            <person name="Sato H."/>
            <person name="Nagai K."/>
            <person name="Kimura K."/>
            <person name="Makita H."/>
            <person name="Sekine M."/>
            <person name="Obayashi M."/>
            <person name="Nishi T."/>
            <person name="Shibahara T."/>
            <person name="Tanaka T."/>
            <person name="Ishii S."/>
            <person name="Yamamoto J."/>
            <person name="Saito K."/>
            <person name="Kawai Y."/>
            <person name="Isono Y."/>
            <person name="Nakamura Y."/>
            <person name="Nagahari K."/>
            <person name="Murakami K."/>
            <person name="Yasuda T."/>
            <person name="Iwayanagi T."/>
            <person name="Wagatsuma M."/>
            <person name="Shiratori A."/>
            <person name="Sudo H."/>
            <person name="Hosoiri T."/>
            <person name="Kaku Y."/>
            <person name="Kodaira H."/>
            <person name="Kondo H."/>
            <person name="Sugawara M."/>
            <person name="Takahashi M."/>
            <person name="Kanda K."/>
            <person name="Yokoi T."/>
            <person name="Furuya T."/>
            <person name="Kikkawa E."/>
            <person name="Omura Y."/>
            <person name="Abe K."/>
            <person name="Kamihara K."/>
            <person name="Katsuta N."/>
            <person name="Sato K."/>
            <person name="Tanikawa M."/>
            <person name="Yamazaki M."/>
            <person name="Ninomiya K."/>
            <person name="Ishibashi T."/>
            <person name="Yamashita H."/>
            <person name="Murakawa K."/>
            <person name="Fujimori K."/>
            <person name="Tanai H."/>
            <person name="Kimata M."/>
            <person name="Watanabe M."/>
            <person name="Hiraoka S."/>
            <person name="Chiba Y."/>
            <person name="Ishida S."/>
            <person name="Ono Y."/>
            <person name="Takiguchi S."/>
            <person name="Watanabe S."/>
            <person name="Yosida M."/>
            <person name="Hotuta T."/>
            <person name="Kusano J."/>
            <person name="Kanehori K."/>
            <person name="Takahashi-Fujii A."/>
            <person name="Hara H."/>
            <person name="Tanase T.-O."/>
            <person name="Nomura Y."/>
            <person name="Togiya S."/>
            <person name="Komai F."/>
            <person name="Hara R."/>
            <person name="Takeuchi K."/>
            <person name="Arita M."/>
            <person name="Imose N."/>
            <person name="Musashino K."/>
            <person name="Yuuki H."/>
            <person name="Oshima A."/>
            <person name="Sasaki N."/>
            <person name="Aotsuka S."/>
            <person name="Yoshikawa Y."/>
            <person name="Matsunawa H."/>
            <person name="Ichihara T."/>
            <person name="Shiohata N."/>
            <person name="Sano S."/>
            <person name="Moriya S."/>
            <person name="Momiyama H."/>
            <person name="Satoh N."/>
            <person name="Takami S."/>
            <person name="Terashima Y."/>
            <person name="Suzuki O."/>
            <person name="Nakagawa S."/>
            <person name="Senoh A."/>
            <person name="Mizoguchi H."/>
            <person name="Goto Y."/>
            <person name="Shimizu F."/>
            <person name="Wakebe H."/>
            <person name="Hishigaki H."/>
            <person name="Watanabe T."/>
            <person name="Sugiyama A."/>
            <person name="Takemoto M."/>
            <person name="Kawakami B."/>
            <person name="Yamazaki M."/>
            <person name="Watanabe K."/>
            <person name="Kumagai A."/>
            <person name="Itakura S."/>
            <person name="Fukuzumi Y."/>
            <person name="Fujimori Y."/>
            <person name="Komiyama M."/>
            <person name="Tashiro H."/>
            <person name="Tanigami A."/>
            <person name="Fujiwara T."/>
            <person name="Ono T."/>
            <person name="Yamada K."/>
            <person name="Fujii Y."/>
            <person name="Ozaki K."/>
            <person name="Hirao M."/>
            <person name="Ohmori Y."/>
            <person name="Kawabata A."/>
            <person name="Hikiji T."/>
            <person name="Kobatake N."/>
            <person name="Inagaki H."/>
            <person name="Ikema Y."/>
            <person name="Okamoto S."/>
            <person name="Okitani R."/>
            <person name="Kawakami T."/>
            <person name="Noguchi S."/>
            <person name="Itoh T."/>
            <person name="Shigeta K."/>
            <person name="Senba T."/>
            <person name="Matsumura K."/>
            <person name="Nakajima Y."/>
            <person name="Mizuno T."/>
            <person name="Morinaga M."/>
            <person name="Sasaki M."/>
            <person name="Togashi T."/>
            <person name="Oyama M."/>
            <person name="Hata H."/>
            <person name="Watanabe M."/>
            <person name="Komatsu T."/>
            <person name="Mizushima-Sugano J."/>
            <person name="Satoh T."/>
            <person name="Shirai Y."/>
            <person name="Takahashi Y."/>
            <person name="Nakagawa K."/>
            <person name="Okumura K."/>
            <person name="Nagase T."/>
            <person name="Nomura N."/>
            <person name="Kikuchi H."/>
            <person name="Masuho Y."/>
            <person name="Yamashita R."/>
            <person name="Nakai K."/>
            <person name="Yada T."/>
            <person name="Nakamura Y."/>
            <person name="Ohara O."/>
            <person name="Isogai T."/>
            <person name="Sugano S."/>
        </authorList>
    </citation>
    <scope>NUCLEOTIDE SEQUENCE [LARGE SCALE MRNA]</scope>
    <source>
        <tissue>Colon</tissue>
    </source>
</reference>
<reference key="2">
    <citation type="journal article" date="2004" name="Proc. Natl. Acad. Sci. U.S.A.">
        <title>Large-scale cDNA transfection screening for genes related to cancer development and progression.</title>
        <authorList>
            <person name="Wan D."/>
            <person name="Gong Y."/>
            <person name="Qin W."/>
            <person name="Zhang P."/>
            <person name="Li J."/>
            <person name="Wei L."/>
            <person name="Zhou X."/>
            <person name="Li H."/>
            <person name="Qiu X."/>
            <person name="Zhong F."/>
            <person name="He L."/>
            <person name="Yu J."/>
            <person name="Yao G."/>
            <person name="Jiang H."/>
            <person name="Qian L."/>
            <person name="Yu Y."/>
            <person name="Shu H."/>
            <person name="Chen X."/>
            <person name="Xu H."/>
            <person name="Guo M."/>
            <person name="Pan Z."/>
            <person name="Chen Y."/>
            <person name="Ge C."/>
            <person name="Yang S."/>
            <person name="Gu J."/>
        </authorList>
    </citation>
    <scope>NUCLEOTIDE SEQUENCE [LARGE SCALE MRNA]</scope>
</reference>
<reference key="3">
    <citation type="journal article" date="2007" name="BMC Genomics">
        <title>The full-ORF clone resource of the German cDNA consortium.</title>
        <authorList>
            <person name="Bechtel S."/>
            <person name="Rosenfelder H."/>
            <person name="Duda A."/>
            <person name="Schmidt C.P."/>
            <person name="Ernst U."/>
            <person name="Wellenreuther R."/>
            <person name="Mehrle A."/>
            <person name="Schuster C."/>
            <person name="Bahr A."/>
            <person name="Bloecker H."/>
            <person name="Heubner D."/>
            <person name="Hoerlein A."/>
            <person name="Michel G."/>
            <person name="Wedler H."/>
            <person name="Koehrer K."/>
            <person name="Ottenwaelder B."/>
            <person name="Poustka A."/>
            <person name="Wiemann S."/>
            <person name="Schupp I."/>
        </authorList>
    </citation>
    <scope>NUCLEOTIDE SEQUENCE [LARGE SCALE MRNA]</scope>
    <source>
        <tissue>Testis</tissue>
    </source>
</reference>
<reference key="4">
    <citation type="journal article" date="2006" name="Nature">
        <title>The DNA sequence and biological annotation of human chromosome 1.</title>
        <authorList>
            <person name="Gregory S.G."/>
            <person name="Barlow K.F."/>
            <person name="McLay K.E."/>
            <person name="Kaul R."/>
            <person name="Swarbreck D."/>
            <person name="Dunham A."/>
            <person name="Scott C.E."/>
            <person name="Howe K.L."/>
            <person name="Woodfine K."/>
            <person name="Spencer C.C.A."/>
            <person name="Jones M.C."/>
            <person name="Gillson C."/>
            <person name="Searle S."/>
            <person name="Zhou Y."/>
            <person name="Kokocinski F."/>
            <person name="McDonald L."/>
            <person name="Evans R."/>
            <person name="Phillips K."/>
            <person name="Atkinson A."/>
            <person name="Cooper R."/>
            <person name="Jones C."/>
            <person name="Hall R.E."/>
            <person name="Andrews T.D."/>
            <person name="Lloyd C."/>
            <person name="Ainscough R."/>
            <person name="Almeida J.P."/>
            <person name="Ambrose K.D."/>
            <person name="Anderson F."/>
            <person name="Andrew R.W."/>
            <person name="Ashwell R.I.S."/>
            <person name="Aubin K."/>
            <person name="Babbage A.K."/>
            <person name="Bagguley C.L."/>
            <person name="Bailey J."/>
            <person name="Beasley H."/>
            <person name="Bethel G."/>
            <person name="Bird C.P."/>
            <person name="Bray-Allen S."/>
            <person name="Brown J.Y."/>
            <person name="Brown A.J."/>
            <person name="Buckley D."/>
            <person name="Burton J."/>
            <person name="Bye J."/>
            <person name="Carder C."/>
            <person name="Chapman J.C."/>
            <person name="Clark S.Y."/>
            <person name="Clarke G."/>
            <person name="Clee C."/>
            <person name="Cobley V."/>
            <person name="Collier R.E."/>
            <person name="Corby N."/>
            <person name="Coville G.J."/>
            <person name="Davies J."/>
            <person name="Deadman R."/>
            <person name="Dunn M."/>
            <person name="Earthrowl M."/>
            <person name="Ellington A.G."/>
            <person name="Errington H."/>
            <person name="Frankish A."/>
            <person name="Frankland J."/>
            <person name="French L."/>
            <person name="Garner P."/>
            <person name="Garnett J."/>
            <person name="Gay L."/>
            <person name="Ghori M.R.J."/>
            <person name="Gibson R."/>
            <person name="Gilby L.M."/>
            <person name="Gillett W."/>
            <person name="Glithero R.J."/>
            <person name="Grafham D.V."/>
            <person name="Griffiths C."/>
            <person name="Griffiths-Jones S."/>
            <person name="Grocock R."/>
            <person name="Hammond S."/>
            <person name="Harrison E.S.I."/>
            <person name="Hart E."/>
            <person name="Haugen E."/>
            <person name="Heath P.D."/>
            <person name="Holmes S."/>
            <person name="Holt K."/>
            <person name="Howden P.J."/>
            <person name="Hunt A.R."/>
            <person name="Hunt S.E."/>
            <person name="Hunter G."/>
            <person name="Isherwood J."/>
            <person name="James R."/>
            <person name="Johnson C."/>
            <person name="Johnson D."/>
            <person name="Joy A."/>
            <person name="Kay M."/>
            <person name="Kershaw J.K."/>
            <person name="Kibukawa M."/>
            <person name="Kimberley A.M."/>
            <person name="King A."/>
            <person name="Knights A.J."/>
            <person name="Lad H."/>
            <person name="Laird G."/>
            <person name="Lawlor S."/>
            <person name="Leongamornlert D.A."/>
            <person name="Lloyd D.M."/>
            <person name="Loveland J."/>
            <person name="Lovell J."/>
            <person name="Lush M.J."/>
            <person name="Lyne R."/>
            <person name="Martin S."/>
            <person name="Mashreghi-Mohammadi M."/>
            <person name="Matthews L."/>
            <person name="Matthews N.S.W."/>
            <person name="McLaren S."/>
            <person name="Milne S."/>
            <person name="Mistry S."/>
            <person name="Moore M.J.F."/>
            <person name="Nickerson T."/>
            <person name="O'Dell C.N."/>
            <person name="Oliver K."/>
            <person name="Palmeiri A."/>
            <person name="Palmer S.A."/>
            <person name="Parker A."/>
            <person name="Patel D."/>
            <person name="Pearce A.V."/>
            <person name="Peck A.I."/>
            <person name="Pelan S."/>
            <person name="Phelps K."/>
            <person name="Phillimore B.J."/>
            <person name="Plumb R."/>
            <person name="Rajan J."/>
            <person name="Raymond C."/>
            <person name="Rouse G."/>
            <person name="Saenphimmachak C."/>
            <person name="Sehra H.K."/>
            <person name="Sheridan E."/>
            <person name="Shownkeen R."/>
            <person name="Sims S."/>
            <person name="Skuce C.D."/>
            <person name="Smith M."/>
            <person name="Steward C."/>
            <person name="Subramanian S."/>
            <person name="Sycamore N."/>
            <person name="Tracey A."/>
            <person name="Tromans A."/>
            <person name="Van Helmond Z."/>
            <person name="Wall M."/>
            <person name="Wallis J.M."/>
            <person name="White S."/>
            <person name="Whitehead S.L."/>
            <person name="Wilkinson J.E."/>
            <person name="Willey D.L."/>
            <person name="Williams H."/>
            <person name="Wilming L."/>
            <person name="Wray P.W."/>
            <person name="Wu Z."/>
            <person name="Coulson A."/>
            <person name="Vaudin M."/>
            <person name="Sulston J.E."/>
            <person name="Durbin R.M."/>
            <person name="Hubbard T."/>
            <person name="Wooster R."/>
            <person name="Dunham I."/>
            <person name="Carter N.P."/>
            <person name="McVean G."/>
            <person name="Ross M.T."/>
            <person name="Harrow J."/>
            <person name="Olson M.V."/>
            <person name="Beck S."/>
            <person name="Rogers J."/>
            <person name="Bentley D.R."/>
        </authorList>
    </citation>
    <scope>NUCLEOTIDE SEQUENCE [LARGE SCALE GENOMIC DNA]</scope>
</reference>
<reference key="5">
    <citation type="submission" date="2005-09" db="EMBL/GenBank/DDBJ databases">
        <authorList>
            <person name="Mural R.J."/>
            <person name="Istrail S."/>
            <person name="Sutton G.G."/>
            <person name="Florea L."/>
            <person name="Halpern A.L."/>
            <person name="Mobarry C.M."/>
            <person name="Lippert R."/>
            <person name="Walenz B."/>
            <person name="Shatkay H."/>
            <person name="Dew I."/>
            <person name="Miller J.R."/>
            <person name="Flanigan M.J."/>
            <person name="Edwards N.J."/>
            <person name="Bolanos R."/>
            <person name="Fasulo D."/>
            <person name="Halldorsson B.V."/>
            <person name="Hannenhalli S."/>
            <person name="Turner R."/>
            <person name="Yooseph S."/>
            <person name="Lu F."/>
            <person name="Nusskern D.R."/>
            <person name="Shue B.C."/>
            <person name="Zheng X.H."/>
            <person name="Zhong F."/>
            <person name="Delcher A.L."/>
            <person name="Huson D.H."/>
            <person name="Kravitz S.A."/>
            <person name="Mouchard L."/>
            <person name="Reinert K."/>
            <person name="Remington K.A."/>
            <person name="Clark A.G."/>
            <person name="Waterman M.S."/>
            <person name="Eichler E.E."/>
            <person name="Adams M.D."/>
            <person name="Hunkapiller M.W."/>
            <person name="Myers E.W."/>
            <person name="Venter J.C."/>
        </authorList>
    </citation>
    <scope>NUCLEOTIDE SEQUENCE [LARGE SCALE GENOMIC DNA]</scope>
</reference>
<reference key="6">
    <citation type="journal article" date="2004" name="Genome Res.">
        <title>The status, quality, and expansion of the NIH full-length cDNA project: the Mammalian Gene Collection (MGC).</title>
        <authorList>
            <consortium name="The MGC Project Team"/>
        </authorList>
    </citation>
    <scope>NUCLEOTIDE SEQUENCE [LARGE SCALE MRNA]</scope>
    <source>
        <tissue>Liver</tissue>
        <tissue>Pancreas</tissue>
        <tissue>Uterus</tissue>
    </source>
</reference>
<reference key="7">
    <citation type="journal article" date="2008" name="J. Proteome Res.">
        <title>Combining protein-based IMAC, peptide-based IMAC, and MudPIT for efficient phosphoproteomic analysis.</title>
        <authorList>
            <person name="Cantin G.T."/>
            <person name="Yi W."/>
            <person name="Lu B."/>
            <person name="Park S.K."/>
            <person name="Xu T."/>
            <person name="Lee J.-D."/>
            <person name="Yates J.R. III"/>
        </authorList>
    </citation>
    <scope>IDENTIFICATION BY MASS SPECTROMETRY [LARGE SCALE ANALYSIS]</scope>
    <source>
        <tissue>Cervix carcinoma</tissue>
    </source>
</reference>
<reference key="8">
    <citation type="journal article" date="2008" name="Proc. Natl. Acad. Sci. U.S.A.">
        <title>A quantitative atlas of mitotic phosphorylation.</title>
        <authorList>
            <person name="Dephoure N."/>
            <person name="Zhou C."/>
            <person name="Villen J."/>
            <person name="Beausoleil S.A."/>
            <person name="Bakalarski C.E."/>
            <person name="Elledge S.J."/>
            <person name="Gygi S.P."/>
        </authorList>
    </citation>
    <scope>IDENTIFICATION BY MASS SPECTROMETRY [LARGE SCALE ANALYSIS]</scope>
    <source>
        <tissue>Cervix carcinoma</tissue>
    </source>
</reference>
<reference key="9">
    <citation type="journal article" date="2009" name="Sci. Signal.">
        <title>Quantitative phosphoproteomic analysis of T cell receptor signaling reveals system-wide modulation of protein-protein interactions.</title>
        <authorList>
            <person name="Mayya V."/>
            <person name="Lundgren D.H."/>
            <person name="Hwang S.-I."/>
            <person name="Rezaul K."/>
            <person name="Wu L."/>
            <person name="Eng J.K."/>
            <person name="Rodionov V."/>
            <person name="Han D.K."/>
        </authorList>
    </citation>
    <scope>PHOSPHORYLATION [LARGE SCALE ANALYSIS] AT SER-49</scope>
    <scope>IDENTIFICATION BY MASS SPECTROMETRY [LARGE SCALE ANALYSIS]</scope>
    <source>
        <tissue>Leukemic T-cell</tissue>
    </source>
</reference>
<reference key="10">
    <citation type="journal article" date="2011" name="Sci. Signal.">
        <title>System-wide temporal characterization of the proteome and phosphoproteome of human embryonic stem cell differentiation.</title>
        <authorList>
            <person name="Rigbolt K.T."/>
            <person name="Prokhorova T.A."/>
            <person name="Akimov V."/>
            <person name="Henningsen J."/>
            <person name="Johansen P.T."/>
            <person name="Kratchmarova I."/>
            <person name="Kassem M."/>
            <person name="Mann M."/>
            <person name="Olsen J.V."/>
            <person name="Blagoev B."/>
        </authorList>
    </citation>
    <scope>PHOSPHORYLATION [LARGE SCALE ANALYSIS] AT SER-49 AND SER-202</scope>
    <scope>IDENTIFICATION BY MASS SPECTROMETRY [LARGE SCALE ANALYSIS]</scope>
</reference>
<reference key="11">
    <citation type="journal article" date="2013" name="J. Proteome Res.">
        <title>Toward a comprehensive characterization of a human cancer cell phosphoproteome.</title>
        <authorList>
            <person name="Zhou H."/>
            <person name="Di Palma S."/>
            <person name="Preisinger C."/>
            <person name="Peng M."/>
            <person name="Polat A.N."/>
            <person name="Heck A.J."/>
            <person name="Mohammed S."/>
        </authorList>
    </citation>
    <scope>PHOSPHORYLATION [LARGE SCALE ANALYSIS] AT SER-49; SER-76; THR-301 AND SER-382</scope>
    <scope>IDENTIFICATION BY MASS SPECTROMETRY [LARGE SCALE ANALYSIS]</scope>
    <source>
        <tissue>Cervix carcinoma</tissue>
        <tissue>Erythroleukemia</tissue>
    </source>
</reference>
<sequence>MAQHDFVPAWLNFSTPQSAKSPTATFEKHGEHLPRGEGRFGVSRRRHNSSDGFFNNGPLRTAGDSWHQPSLFRHDSVDSGVSKGAYAGITGNPSGWHSSSRGHDGMSQRSGGGTGNHRHWNGSFHSRKGCAFQEKPPMEIREEKKEDKVEKLQFEEEDFPSLNPEAGKQHQPCRPIGTPSGVWENPPSAKQPSKMLVIKKVSKEDPAAAFSAAFTSPGSHHANGNKLSSVVPSVYKNLVPKPVPPPSKPNAWKANRMEHKSGSLSSSRESAFTSPISVTKPVVLASGAALSSPKESPSSTTPPIEISSSRLTKLTRRTTDRKSEFLKTLKDDRNGDFSENRDCDKLEDLEDNSTPEPKENGEEGCHQNGLALPVVEEGEVLSHSLEAEHRLLKAMGWQEYPENDENCLPLTEDELKEFHMKTEQLRRNGFGKNGFLQSRSSSLFSPWRSTCKAEFEDSDTETSSSETSDDDAWK</sequence>